<proteinExistence type="predicted"/>
<feature type="chain" id="PRO_0000210432" description="Uncharacterized protein MG131">
    <location>
        <begin position="1"/>
        <end position="74"/>
    </location>
</feature>
<feature type="transmembrane region" description="Helical" evidence="1">
    <location>
        <begin position="3"/>
        <end position="23"/>
    </location>
</feature>
<feature type="transmembrane region" description="Helical" evidence="1">
    <location>
        <begin position="35"/>
        <end position="55"/>
    </location>
</feature>
<keyword id="KW-1003">Cell membrane</keyword>
<keyword id="KW-0472">Membrane</keyword>
<keyword id="KW-1185">Reference proteome</keyword>
<keyword id="KW-0812">Transmembrane</keyword>
<keyword id="KW-1133">Transmembrane helix</keyword>
<name>Y131_MYCGE</name>
<gene>
    <name type="ordered locus">MG131</name>
</gene>
<protein>
    <recommendedName>
        <fullName>Uncharacterized protein MG131</fullName>
    </recommendedName>
</protein>
<organism>
    <name type="scientific">Mycoplasma genitalium (strain ATCC 33530 / DSM 19775 / NCTC 10195 / G37)</name>
    <name type="common">Mycoplasmoides genitalium</name>
    <dbReference type="NCBI Taxonomy" id="243273"/>
    <lineage>
        <taxon>Bacteria</taxon>
        <taxon>Bacillati</taxon>
        <taxon>Mycoplasmatota</taxon>
        <taxon>Mycoplasmoidales</taxon>
        <taxon>Mycoplasmoidaceae</taxon>
        <taxon>Mycoplasmoides</taxon>
    </lineage>
</organism>
<comment type="subcellular location">
    <subcellularLocation>
        <location evidence="3">Cell membrane</location>
        <topology evidence="3">Multi-pass membrane protein</topology>
    </subcellularLocation>
</comment>
<comment type="disruption phenotype">
    <text evidence="2">Not essential, it can be deleted.</text>
</comment>
<evidence type="ECO:0000255" key="1"/>
<evidence type="ECO:0000269" key="2">
    <source>
    </source>
</evidence>
<evidence type="ECO:0000305" key="3"/>
<dbReference type="EMBL" id="L43967">
    <property type="status" value="NOT_ANNOTATED_CDS"/>
    <property type="molecule type" value="Genomic_DNA"/>
</dbReference>
<dbReference type="PIR" id="E64214">
    <property type="entry name" value="E64214"/>
</dbReference>
<dbReference type="SMR" id="P47377"/>
<dbReference type="InParanoid" id="P47377"/>
<dbReference type="Proteomes" id="UP000000807">
    <property type="component" value="Chromosome"/>
</dbReference>
<dbReference type="GO" id="GO:0005886">
    <property type="term" value="C:plasma membrane"/>
    <property type="evidence" value="ECO:0007669"/>
    <property type="project" value="UniProtKB-SubCell"/>
</dbReference>
<sequence>MQYSALIPLFILLISLVLFCFSFRKNQSENQIVKILFFAYCIDFLALILAVMLLTFLSHGLLSLAILIPVLVFQ</sequence>
<reference key="1">
    <citation type="journal article" date="1995" name="Science">
        <title>The minimal gene complement of Mycoplasma genitalium.</title>
        <authorList>
            <person name="Fraser C.M."/>
            <person name="Gocayne J.D."/>
            <person name="White O."/>
            <person name="Adams M.D."/>
            <person name="Clayton R.A."/>
            <person name="Fleischmann R.D."/>
            <person name="Bult C.J."/>
            <person name="Kerlavage A.R."/>
            <person name="Sutton G.G."/>
            <person name="Kelley J.M."/>
            <person name="Fritchman J.L."/>
            <person name="Weidman J.F."/>
            <person name="Small K.V."/>
            <person name="Sandusky M."/>
            <person name="Fuhrmann J.L."/>
            <person name="Nguyen D.T."/>
            <person name="Utterback T.R."/>
            <person name="Saudek D.M."/>
            <person name="Phillips C.A."/>
            <person name="Merrick J.M."/>
            <person name="Tomb J.-F."/>
            <person name="Dougherty B.A."/>
            <person name="Bott K.F."/>
            <person name="Hu P.-C."/>
            <person name="Lucier T.S."/>
            <person name="Peterson S.N."/>
            <person name="Smith H.O."/>
            <person name="Hutchison C.A. III"/>
            <person name="Venter J.C."/>
        </authorList>
    </citation>
    <scope>NUCLEOTIDE SEQUENCE [LARGE SCALE GENOMIC DNA]</scope>
    <source>
        <strain>ATCC 33530 / DSM 19775 / NCTC 10195 / G37</strain>
    </source>
</reference>
<reference key="2">
    <citation type="journal article" date="2006" name="Proc. Natl. Acad. Sci. U.S.A.">
        <title>Essential genes of a minimal bacterium.</title>
        <authorList>
            <person name="Glass J.I."/>
            <person name="Assad-Garcia N."/>
            <person name="Alperovich N."/>
            <person name="Yooseph S."/>
            <person name="Lewis M.R."/>
            <person name="Maruf M."/>
            <person name="Hutchison C.A. III"/>
            <person name="Smith H.O."/>
            <person name="Venter J.C."/>
        </authorList>
    </citation>
    <scope>DISRUPTION PHENOTYPE</scope>
    <source>
        <strain>ATCC 33530 / DSM 19775 / NCTC 10195 / G37</strain>
    </source>
</reference>
<accession>P47377</accession>